<proteinExistence type="evidence at protein level"/>
<evidence type="ECO:0000269" key="1">
    <source>
    </source>
</evidence>
<evidence type="ECO:0000303" key="2">
    <source>
    </source>
</evidence>
<evidence type="ECO:0000305" key="3"/>
<evidence type="ECO:0000305" key="4">
    <source>
    </source>
</evidence>
<evidence type="ECO:0007744" key="5">
    <source>
        <dbReference type="PDB" id="6BBM"/>
    </source>
</evidence>
<accession>P03689</accession>
<feature type="chain" id="PRO_0000077704" description="Helicase loader">
    <location>
        <begin position="1"/>
        <end position="233"/>
    </location>
</feature>
<reference key="1">
    <citation type="journal article" date="1982" name="J. Mol. Biol.">
        <title>Nucleotide sequence of bacteriophage lambda DNA.</title>
        <authorList>
            <person name="Sanger F."/>
            <person name="Coulson A.R."/>
            <person name="Hong G.F."/>
            <person name="Hill D.F."/>
            <person name="Petersen G.B."/>
        </authorList>
    </citation>
    <scope>NUCLEOTIDE SEQUENCE [LARGE SCALE GENOMIC DNA]</scope>
</reference>
<reference key="2">
    <citation type="journal article" date="1980" name="Biochem. Int.">
        <title>The primary structure of the phage lambda P gene completes the nucleotide sequence of the plasmid lambda dvh93.</title>
        <authorList>
            <person name="Schwarz E."/>
            <person name="Scherer G."/>
            <person name="Hobom G."/>
            <person name="Koessel H."/>
        </authorList>
    </citation>
    <scope>NUCLEOTIDE SEQUENCE [GENOMIC DNA]</scope>
    <source>
        <strain>DVO21</strain>
    </source>
</reference>
<reference evidence="5" key="3">
    <citation type="journal article" date="2018" name="Elife">
        <title>Mechanisms of opening and closing of the bacterial replicative helicase.</title>
        <authorList>
            <person name="Chase J."/>
            <person name="Catalano A."/>
            <person name="Noble A.J."/>
            <person name="Eng E.T."/>
            <person name="Olinares P.D."/>
            <person name="Molloy K."/>
            <person name="Pakotiprapha D."/>
            <person name="Samuels M."/>
            <person name="Chait B."/>
            <person name="des Georges A."/>
            <person name="Jeruzalmi D."/>
        </authorList>
    </citation>
    <scope>STRUCTURE BY ELECTRON MICROSCOPY (4.10 ANGSTROMS) OF 1-107 IN COMPLEX WITH HOST DNAB</scope>
    <scope>FUNCTION</scope>
    <scope>SUBUNIT</scope>
</reference>
<protein>
    <recommendedName>
        <fullName evidence="3">Helicase loader</fullName>
    </recommendedName>
    <alternativeName>
        <fullName evidence="2">Lambda P helicase loader</fullName>
    </alternativeName>
    <alternativeName>
        <fullName>Replication protein P</fullName>
    </alternativeName>
</protein>
<sequence length="233" mass="26518">MKNIAAQMVNFDREQMRRIANNMPEQYDEKPQVQQVAQIINGVFSQLLATFPASLANRDQNEVNEIRRQWVLAFRENGITTMEQVNAGMRVARRQNRPFLPSPGQFVAWCREEASVTAGLPNVSELVDMVYEYCRKRGLYPDAESYPWKSNAHYWLVTNLYQNMRANALTDAELRRKAADELVHMTARINRGEAIPEPVKQLPVMGGRPLNRAQALAKIAEIKAKFGLKGASV</sequence>
<name>VRPP_LAMBD</name>
<organism>
    <name type="scientific">Escherichia phage lambda</name>
    <name type="common">Bacteriophage lambda</name>
    <dbReference type="NCBI Taxonomy" id="2681611"/>
    <lineage>
        <taxon>Viruses</taxon>
        <taxon>Duplodnaviria</taxon>
        <taxon>Heunggongvirae</taxon>
        <taxon>Uroviricota</taxon>
        <taxon>Caudoviricetes</taxon>
        <taxon>Lambdavirus</taxon>
        <taxon>Lambdavirus lambda</taxon>
    </lineage>
</organism>
<dbReference type="EMBL" id="J02459">
    <property type="protein sequence ID" value="AAA96585.1"/>
    <property type="molecule type" value="Genomic_DNA"/>
</dbReference>
<dbReference type="PIR" id="G94614">
    <property type="entry name" value="PQBPL"/>
</dbReference>
<dbReference type="RefSeq" id="NP_040632.1">
    <property type="nucleotide sequence ID" value="NC_001416.1"/>
</dbReference>
<dbReference type="PDB" id="6BBM">
    <property type="method" value="EM"/>
    <property type="resolution" value="4.10 A"/>
    <property type="chains" value="V/W/X/Y/Z=1-107"/>
</dbReference>
<dbReference type="PDBsum" id="6BBM"/>
<dbReference type="EMDB" id="EMD-7076"/>
<dbReference type="SMR" id="P03689"/>
<dbReference type="IntAct" id="P03689">
    <property type="interactions" value="8"/>
</dbReference>
<dbReference type="GeneID" id="2703495"/>
<dbReference type="KEGG" id="vg:2703495"/>
<dbReference type="Proteomes" id="UP000001711">
    <property type="component" value="Genome"/>
</dbReference>
<dbReference type="GO" id="GO:0039686">
    <property type="term" value="P:bidirectional double-stranded viral DNA replication"/>
    <property type="evidence" value="ECO:0000314"/>
    <property type="project" value="UniProtKB"/>
</dbReference>
<dbReference type="GO" id="GO:0006270">
    <property type="term" value="P:DNA replication initiation"/>
    <property type="evidence" value="ECO:0007669"/>
    <property type="project" value="InterPro"/>
</dbReference>
<dbReference type="InterPro" id="IPR009731">
    <property type="entry name" value="P-like"/>
</dbReference>
<dbReference type="Pfam" id="PF06992">
    <property type="entry name" value="Phage_lambda_P"/>
    <property type="match status" value="1"/>
</dbReference>
<comment type="function">
    <text evidence="1 4">Loads (host) replicative DNA helicase DnaB onto single-stranded (ss)DNA at the origin of replication (Probable) (PubMed:30582519). Reconfigures the DnaB hexameric ring, generating an opening large enough to permit ssDNA into the central channel (PubMed:30582519). Necessary for the bidirectional replication of lambda DNA. It interacts with the ori (origin of replication) region of the genome during the initiation of replication.</text>
</comment>
<comment type="subunit">
    <text evidence="1">Forms a (host) DnaB(6):lambda P(5) complex in the presence of ssDNA (PubMed:30582519).</text>
</comment>
<comment type="similarity">
    <text evidence="3">Belongs to the phage P protein family.</text>
</comment>
<gene>
    <name type="primary">P</name>
</gene>
<keyword id="KW-0002">3D-structure</keyword>
<keyword id="KW-0235">DNA replication</keyword>
<keyword id="KW-0945">Host-virus interaction</keyword>
<keyword id="KW-1185">Reference proteome</keyword>
<keyword id="KW-1194">Viral DNA replication</keyword>
<organismHost>
    <name type="scientific">Escherichia coli</name>
    <dbReference type="NCBI Taxonomy" id="562"/>
</organismHost>